<feature type="chain" id="PRO_1000117274" description="Sugar fermentation stimulation protein homolog">
    <location>
        <begin position="1"/>
        <end position="234"/>
    </location>
</feature>
<accession>B8CTC1</accession>
<protein>
    <recommendedName>
        <fullName evidence="1">Sugar fermentation stimulation protein homolog</fullName>
    </recommendedName>
</protein>
<gene>
    <name evidence="1" type="primary">sfsA</name>
    <name type="ordered locus">swp_4385</name>
</gene>
<reference key="1">
    <citation type="journal article" date="2008" name="PLoS ONE">
        <title>Environmental adaptation: genomic analysis of the piezotolerant and psychrotolerant deep-sea iron reducing bacterium Shewanella piezotolerans WP3.</title>
        <authorList>
            <person name="Wang F."/>
            <person name="Wang J."/>
            <person name="Jian H."/>
            <person name="Zhang B."/>
            <person name="Li S."/>
            <person name="Wang F."/>
            <person name="Zeng X."/>
            <person name="Gao L."/>
            <person name="Bartlett D.H."/>
            <person name="Yu J."/>
            <person name="Hu S."/>
            <person name="Xiao X."/>
        </authorList>
    </citation>
    <scope>NUCLEOTIDE SEQUENCE [LARGE SCALE GENOMIC DNA]</scope>
    <source>
        <strain>WP3 / JCM 13877</strain>
    </source>
</reference>
<name>SFSA_SHEPW</name>
<sequence>MKFTPEFASGLLIQRYKRFLTDITLEDGTEVTIHCPNTGSMRNCLFPGNKVWFSVSNNPKRKYSRTWEQAQTPDGDIIGINTGRANALAEEAINAGTIVELQGYESLRREVKYGSENSRIDILLTSDAQANCYVEVKSCTLLENGQGYFPDAVTTRGQKHLRELMEMVEQGHRAVLLFVVQHTGIHSVKAAEHIDPAYAKLLSEAHATGVEVLAYSADMSPIAASLVKSCPVKL</sequence>
<proteinExistence type="inferred from homology"/>
<comment type="similarity">
    <text evidence="1">Belongs to the SfsA family.</text>
</comment>
<organism>
    <name type="scientific">Shewanella piezotolerans (strain WP3 / JCM 13877)</name>
    <dbReference type="NCBI Taxonomy" id="225849"/>
    <lineage>
        <taxon>Bacteria</taxon>
        <taxon>Pseudomonadati</taxon>
        <taxon>Pseudomonadota</taxon>
        <taxon>Gammaproteobacteria</taxon>
        <taxon>Alteromonadales</taxon>
        <taxon>Shewanellaceae</taxon>
        <taxon>Shewanella</taxon>
    </lineage>
</organism>
<evidence type="ECO:0000255" key="1">
    <source>
        <dbReference type="HAMAP-Rule" id="MF_00095"/>
    </source>
</evidence>
<dbReference type="EMBL" id="CP000472">
    <property type="protein sequence ID" value="ACJ31030.1"/>
    <property type="molecule type" value="Genomic_DNA"/>
</dbReference>
<dbReference type="RefSeq" id="WP_020914365.1">
    <property type="nucleotide sequence ID" value="NC_011566.1"/>
</dbReference>
<dbReference type="SMR" id="B8CTC1"/>
<dbReference type="STRING" id="225849.swp_4385"/>
<dbReference type="KEGG" id="swp:swp_4385"/>
<dbReference type="eggNOG" id="COG1489">
    <property type="taxonomic scope" value="Bacteria"/>
</dbReference>
<dbReference type="HOGENOM" id="CLU_052299_2_0_6"/>
<dbReference type="OrthoDB" id="9802365at2"/>
<dbReference type="Proteomes" id="UP000000753">
    <property type="component" value="Chromosome"/>
</dbReference>
<dbReference type="GO" id="GO:0003677">
    <property type="term" value="F:DNA binding"/>
    <property type="evidence" value="ECO:0007669"/>
    <property type="project" value="InterPro"/>
</dbReference>
<dbReference type="CDD" id="cd22359">
    <property type="entry name" value="SfsA-like_bacterial"/>
    <property type="match status" value="1"/>
</dbReference>
<dbReference type="FunFam" id="2.40.50.580:FF:000001">
    <property type="entry name" value="Sugar fermentation stimulation protein A"/>
    <property type="match status" value="1"/>
</dbReference>
<dbReference type="FunFam" id="3.40.1350.60:FF:000001">
    <property type="entry name" value="Sugar fermentation stimulation protein A"/>
    <property type="match status" value="1"/>
</dbReference>
<dbReference type="Gene3D" id="2.40.50.580">
    <property type="match status" value="1"/>
</dbReference>
<dbReference type="Gene3D" id="3.40.1350.60">
    <property type="match status" value="1"/>
</dbReference>
<dbReference type="HAMAP" id="MF_00095">
    <property type="entry name" value="SfsA"/>
    <property type="match status" value="1"/>
</dbReference>
<dbReference type="InterPro" id="IPR005224">
    <property type="entry name" value="SfsA"/>
</dbReference>
<dbReference type="InterPro" id="IPR040452">
    <property type="entry name" value="SfsA_C"/>
</dbReference>
<dbReference type="InterPro" id="IPR041465">
    <property type="entry name" value="SfsA_N"/>
</dbReference>
<dbReference type="NCBIfam" id="TIGR00230">
    <property type="entry name" value="sfsA"/>
    <property type="match status" value="1"/>
</dbReference>
<dbReference type="PANTHER" id="PTHR30545">
    <property type="entry name" value="SUGAR FERMENTATION STIMULATION PROTEIN A"/>
    <property type="match status" value="1"/>
</dbReference>
<dbReference type="PANTHER" id="PTHR30545:SF2">
    <property type="entry name" value="SUGAR FERMENTATION STIMULATION PROTEIN A"/>
    <property type="match status" value="1"/>
</dbReference>
<dbReference type="Pfam" id="PF03749">
    <property type="entry name" value="SfsA"/>
    <property type="match status" value="1"/>
</dbReference>
<dbReference type="Pfam" id="PF17746">
    <property type="entry name" value="SfsA_N"/>
    <property type="match status" value="1"/>
</dbReference>